<comment type="function">
    <text evidence="1">Fluoride-specific ion channel. Important for reducing fluoride concentration in the cell, thus reducing its toxicity.</text>
</comment>
<comment type="catalytic activity">
    <reaction evidence="1">
        <text>fluoride(in) = fluoride(out)</text>
        <dbReference type="Rhea" id="RHEA:76159"/>
        <dbReference type="ChEBI" id="CHEBI:17051"/>
    </reaction>
    <physiologicalReaction direction="left-to-right" evidence="1">
        <dbReference type="Rhea" id="RHEA:76160"/>
    </physiologicalReaction>
</comment>
<comment type="activity regulation">
    <text evidence="1">Na(+) is not transported, but it plays an essential structural role and its presence is essential for fluoride channel function.</text>
</comment>
<comment type="subcellular location">
    <subcellularLocation>
        <location evidence="1">Cell membrane</location>
        <topology evidence="1">Multi-pass membrane protein</topology>
    </subcellularLocation>
</comment>
<comment type="similarity">
    <text evidence="1">Belongs to the fluoride channel Fluc/FEX (TC 1.A.43) family.</text>
</comment>
<feature type="chain" id="PRO_0000252895" description="Fluoride-specific ion channel FluC 2">
    <location>
        <begin position="1"/>
        <end position="129"/>
    </location>
</feature>
<feature type="transmembrane region" description="Helical" evidence="1">
    <location>
        <begin position="9"/>
        <end position="29"/>
    </location>
</feature>
<feature type="transmembrane region" description="Helical" evidence="1">
    <location>
        <begin position="37"/>
        <end position="57"/>
    </location>
</feature>
<feature type="transmembrane region" description="Helical" evidence="1">
    <location>
        <begin position="74"/>
        <end position="94"/>
    </location>
</feature>
<feature type="transmembrane region" description="Helical" evidence="1">
    <location>
        <begin position="100"/>
        <end position="120"/>
    </location>
</feature>
<feature type="binding site" evidence="1">
    <location>
        <position position="76"/>
    </location>
    <ligand>
        <name>Na(+)</name>
        <dbReference type="ChEBI" id="CHEBI:29101"/>
        <note>structural</note>
    </ligand>
</feature>
<feature type="binding site" evidence="1">
    <location>
        <position position="79"/>
    </location>
    <ligand>
        <name>Na(+)</name>
        <dbReference type="ChEBI" id="CHEBI:29101"/>
        <note>structural</note>
    </ligand>
</feature>
<sequence>MIEVQNVKLGTLISVFFFGMIGGTLRYLLSLKLASTGTILVNLIGSFCLAFLTYYVIERQKLPAWLSTGLGTGMVGAFTTFSTFTVDILGLSTFTDATFYLLISVVGGFLLAYTGMILGIKLGKVGDRR</sequence>
<protein>
    <recommendedName>
        <fullName evidence="1">Fluoride-specific ion channel FluC 2</fullName>
    </recommendedName>
</protein>
<reference key="1">
    <citation type="journal article" date="2006" name="Proc. Natl. Acad. Sci. U.S.A.">
        <title>Multireplicon genome architecture of Lactobacillus salivarius.</title>
        <authorList>
            <person name="Claesson M.J."/>
            <person name="Li Y."/>
            <person name="Leahy S."/>
            <person name="Canchaya C."/>
            <person name="van Pijkeren J.P."/>
            <person name="Cerdeno-Tarraga A.M."/>
            <person name="Parkhill J."/>
            <person name="Flynn S."/>
            <person name="O'Sullivan G.C."/>
            <person name="Collins J.K."/>
            <person name="Higgins D."/>
            <person name="Shanahan F."/>
            <person name="Fitzgerald G.F."/>
            <person name="van Sinderen D."/>
            <person name="O'Toole P.W."/>
        </authorList>
    </citation>
    <scope>NUCLEOTIDE SEQUENCE [LARGE SCALE GENOMIC DNA]</scope>
    <source>
        <strain>UCC118</strain>
    </source>
</reference>
<dbReference type="EMBL" id="CP000233">
    <property type="protein sequence ID" value="ABE00278.1"/>
    <property type="molecule type" value="Genomic_DNA"/>
</dbReference>
<dbReference type="RefSeq" id="WP_011476362.1">
    <property type="nucleotide sequence ID" value="NC_007929.1"/>
</dbReference>
<dbReference type="RefSeq" id="YP_536361.1">
    <property type="nucleotide sequence ID" value="NC_007929.1"/>
</dbReference>
<dbReference type="SMR" id="Q1WS51"/>
<dbReference type="STRING" id="362948.LSL_1474"/>
<dbReference type="KEGG" id="lsl:LSL_1474"/>
<dbReference type="PATRIC" id="fig|362948.14.peg.1557"/>
<dbReference type="HOGENOM" id="CLU_114342_1_2_9"/>
<dbReference type="OrthoDB" id="9799631at2"/>
<dbReference type="Proteomes" id="UP000006559">
    <property type="component" value="Chromosome"/>
</dbReference>
<dbReference type="GO" id="GO:0005886">
    <property type="term" value="C:plasma membrane"/>
    <property type="evidence" value="ECO:0007669"/>
    <property type="project" value="UniProtKB-SubCell"/>
</dbReference>
<dbReference type="GO" id="GO:0062054">
    <property type="term" value="F:fluoride channel activity"/>
    <property type="evidence" value="ECO:0007669"/>
    <property type="project" value="UniProtKB-UniRule"/>
</dbReference>
<dbReference type="GO" id="GO:0046872">
    <property type="term" value="F:metal ion binding"/>
    <property type="evidence" value="ECO:0007669"/>
    <property type="project" value="UniProtKB-KW"/>
</dbReference>
<dbReference type="GO" id="GO:0140114">
    <property type="term" value="P:cellular detoxification of fluoride"/>
    <property type="evidence" value="ECO:0007669"/>
    <property type="project" value="UniProtKB-UniRule"/>
</dbReference>
<dbReference type="HAMAP" id="MF_00454">
    <property type="entry name" value="FluC"/>
    <property type="match status" value="1"/>
</dbReference>
<dbReference type="InterPro" id="IPR003691">
    <property type="entry name" value="FluC"/>
</dbReference>
<dbReference type="PANTHER" id="PTHR28259">
    <property type="entry name" value="FLUORIDE EXPORT PROTEIN 1-RELATED"/>
    <property type="match status" value="1"/>
</dbReference>
<dbReference type="PANTHER" id="PTHR28259:SF1">
    <property type="entry name" value="FLUORIDE EXPORT PROTEIN 1-RELATED"/>
    <property type="match status" value="1"/>
</dbReference>
<dbReference type="Pfam" id="PF02537">
    <property type="entry name" value="CRCB"/>
    <property type="match status" value="1"/>
</dbReference>
<evidence type="ECO:0000255" key="1">
    <source>
        <dbReference type="HAMAP-Rule" id="MF_00454"/>
    </source>
</evidence>
<name>FLUC2_LIGS1</name>
<accession>Q1WS51</accession>
<gene>
    <name evidence="1" type="primary">fluC2</name>
    <name evidence="1" type="synonym">crcB2</name>
    <name type="ordered locus">LSL_1474</name>
</gene>
<keyword id="KW-1003">Cell membrane</keyword>
<keyword id="KW-0407">Ion channel</keyword>
<keyword id="KW-0406">Ion transport</keyword>
<keyword id="KW-0472">Membrane</keyword>
<keyword id="KW-0479">Metal-binding</keyword>
<keyword id="KW-1185">Reference proteome</keyword>
<keyword id="KW-0915">Sodium</keyword>
<keyword id="KW-0812">Transmembrane</keyword>
<keyword id="KW-1133">Transmembrane helix</keyword>
<keyword id="KW-0813">Transport</keyword>
<proteinExistence type="inferred from homology"/>
<organism>
    <name type="scientific">Ligilactobacillus salivarius (strain UCC118)</name>
    <name type="common">Lactobacillus salivarius</name>
    <dbReference type="NCBI Taxonomy" id="362948"/>
    <lineage>
        <taxon>Bacteria</taxon>
        <taxon>Bacillati</taxon>
        <taxon>Bacillota</taxon>
        <taxon>Bacilli</taxon>
        <taxon>Lactobacillales</taxon>
        <taxon>Lactobacillaceae</taxon>
        <taxon>Ligilactobacillus</taxon>
    </lineage>
</organism>